<comment type="function">
    <text evidence="1">Condensation of UDP-2,3-diacylglucosamine and 2,3-diacylglucosamine-1-phosphate to form lipid A disaccharide, a precursor of lipid A, a phosphorylated glycolipid that anchors the lipopolysaccharide to the outer membrane of the cell.</text>
</comment>
<comment type="catalytic activity">
    <reaction evidence="1">
        <text>2-N,3-O-bis[(3R)-3-hydroxytetradecanoyl]-alpha-D-glucosaminyl 1-phosphate + UDP-2-N,3-O-bis[(3R)-3-hydroxytetradecanoyl]-alpha-D-glucosamine = lipid A disaccharide (E. coli) + UDP + H(+)</text>
        <dbReference type="Rhea" id="RHEA:22668"/>
        <dbReference type="ChEBI" id="CHEBI:15378"/>
        <dbReference type="ChEBI" id="CHEBI:57957"/>
        <dbReference type="ChEBI" id="CHEBI:58223"/>
        <dbReference type="ChEBI" id="CHEBI:58466"/>
        <dbReference type="ChEBI" id="CHEBI:78847"/>
    </reaction>
</comment>
<comment type="catalytic activity">
    <reaction evidence="1">
        <text>a lipid X + a UDP-2-N,3-O-bis[(3R)-3-hydroxyacyl]-alpha-D-glucosamine = a lipid A disaccharide + UDP + H(+)</text>
        <dbReference type="Rhea" id="RHEA:67828"/>
        <dbReference type="ChEBI" id="CHEBI:15378"/>
        <dbReference type="ChEBI" id="CHEBI:58223"/>
        <dbReference type="ChEBI" id="CHEBI:137748"/>
        <dbReference type="ChEBI" id="CHEBI:176338"/>
        <dbReference type="ChEBI" id="CHEBI:176343"/>
        <dbReference type="EC" id="2.4.1.182"/>
    </reaction>
</comment>
<comment type="pathway">
    <text evidence="1">Glycolipid biosynthesis; lipid IV(A) biosynthesis; lipid IV(A) from (3R)-3-hydroxytetradecanoyl-[acyl-carrier-protein] and UDP-N-acetyl-alpha-D-glucosamine: step 5/6.</text>
</comment>
<comment type="similarity">
    <text evidence="1">Belongs to the LpxB family.</text>
</comment>
<evidence type="ECO:0000255" key="1">
    <source>
        <dbReference type="HAMAP-Rule" id="MF_00392"/>
    </source>
</evidence>
<keyword id="KW-0328">Glycosyltransferase</keyword>
<keyword id="KW-0441">Lipid A biosynthesis</keyword>
<keyword id="KW-0444">Lipid biosynthesis</keyword>
<keyword id="KW-0443">Lipid metabolism</keyword>
<keyword id="KW-1185">Reference proteome</keyword>
<keyword id="KW-0808">Transferase</keyword>
<reference key="1">
    <citation type="submission" date="2007-08" db="EMBL/GenBank/DDBJ databases">
        <authorList>
            <consortium name="The Citrobacter koseri Genome Sequencing Project"/>
            <person name="McClelland M."/>
            <person name="Sanderson E.K."/>
            <person name="Porwollik S."/>
            <person name="Spieth J."/>
            <person name="Clifton W.S."/>
            <person name="Latreille P."/>
            <person name="Courtney L."/>
            <person name="Wang C."/>
            <person name="Pepin K."/>
            <person name="Bhonagiri V."/>
            <person name="Nash W."/>
            <person name="Johnson M."/>
            <person name="Thiruvilangam P."/>
            <person name="Wilson R."/>
        </authorList>
    </citation>
    <scope>NUCLEOTIDE SEQUENCE [LARGE SCALE GENOMIC DNA]</scope>
    <source>
        <strain>ATCC BAA-895 / CDC 4225-83 / SGSC4696</strain>
    </source>
</reference>
<accession>A8ALA6</accession>
<name>LPXB_CITK8</name>
<dbReference type="EC" id="2.4.1.182" evidence="1"/>
<dbReference type="EMBL" id="CP000822">
    <property type="protein sequence ID" value="ABV14269.1"/>
    <property type="molecule type" value="Genomic_DNA"/>
</dbReference>
<dbReference type="RefSeq" id="WP_012133975.1">
    <property type="nucleotide sequence ID" value="NC_009792.1"/>
</dbReference>
<dbReference type="SMR" id="A8ALA6"/>
<dbReference type="STRING" id="290338.CKO_03184"/>
<dbReference type="CAZy" id="GT19">
    <property type="family name" value="Glycosyltransferase Family 19"/>
</dbReference>
<dbReference type="GeneID" id="45136969"/>
<dbReference type="KEGG" id="cko:CKO_03184"/>
<dbReference type="HOGENOM" id="CLU_036577_3_0_6"/>
<dbReference type="OrthoDB" id="9801642at2"/>
<dbReference type="UniPathway" id="UPA00359">
    <property type="reaction ID" value="UER00481"/>
</dbReference>
<dbReference type="Proteomes" id="UP000008148">
    <property type="component" value="Chromosome"/>
</dbReference>
<dbReference type="GO" id="GO:0016020">
    <property type="term" value="C:membrane"/>
    <property type="evidence" value="ECO:0007669"/>
    <property type="project" value="GOC"/>
</dbReference>
<dbReference type="GO" id="GO:0008915">
    <property type="term" value="F:lipid-A-disaccharide synthase activity"/>
    <property type="evidence" value="ECO:0007669"/>
    <property type="project" value="UniProtKB-UniRule"/>
</dbReference>
<dbReference type="GO" id="GO:0005543">
    <property type="term" value="F:phospholipid binding"/>
    <property type="evidence" value="ECO:0007669"/>
    <property type="project" value="TreeGrafter"/>
</dbReference>
<dbReference type="GO" id="GO:0009245">
    <property type="term" value="P:lipid A biosynthetic process"/>
    <property type="evidence" value="ECO:0007669"/>
    <property type="project" value="UniProtKB-UniRule"/>
</dbReference>
<dbReference type="CDD" id="cd01635">
    <property type="entry name" value="Glycosyltransferase_GTB-type"/>
    <property type="match status" value="1"/>
</dbReference>
<dbReference type="HAMAP" id="MF_00392">
    <property type="entry name" value="LpxB"/>
    <property type="match status" value="1"/>
</dbReference>
<dbReference type="InterPro" id="IPR003835">
    <property type="entry name" value="Glyco_trans_19"/>
</dbReference>
<dbReference type="NCBIfam" id="TIGR00215">
    <property type="entry name" value="lpxB"/>
    <property type="match status" value="1"/>
</dbReference>
<dbReference type="PANTHER" id="PTHR30372">
    <property type="entry name" value="LIPID-A-DISACCHARIDE SYNTHASE"/>
    <property type="match status" value="1"/>
</dbReference>
<dbReference type="PANTHER" id="PTHR30372:SF4">
    <property type="entry name" value="LIPID-A-DISACCHARIDE SYNTHASE, MITOCHONDRIAL-RELATED"/>
    <property type="match status" value="1"/>
</dbReference>
<dbReference type="Pfam" id="PF02684">
    <property type="entry name" value="LpxB"/>
    <property type="match status" value="1"/>
</dbReference>
<dbReference type="SUPFAM" id="SSF53756">
    <property type="entry name" value="UDP-Glycosyltransferase/glycogen phosphorylase"/>
    <property type="match status" value="1"/>
</dbReference>
<organism>
    <name type="scientific">Citrobacter koseri (strain ATCC BAA-895 / CDC 4225-83 / SGSC4696)</name>
    <dbReference type="NCBI Taxonomy" id="290338"/>
    <lineage>
        <taxon>Bacteria</taxon>
        <taxon>Pseudomonadati</taxon>
        <taxon>Pseudomonadota</taxon>
        <taxon>Gammaproteobacteria</taxon>
        <taxon>Enterobacterales</taxon>
        <taxon>Enterobacteriaceae</taxon>
        <taxon>Citrobacter</taxon>
    </lineage>
</organism>
<gene>
    <name evidence="1" type="primary">lpxB</name>
    <name type="ordered locus">CKO_03184</name>
</gene>
<protein>
    <recommendedName>
        <fullName evidence="1">Lipid-A-disaccharide synthase</fullName>
        <ecNumber evidence="1">2.4.1.182</ecNumber>
    </recommendedName>
</protein>
<proteinExistence type="inferred from homology"/>
<feature type="chain" id="PRO_1000049393" description="Lipid-A-disaccharide synthase">
    <location>
        <begin position="1"/>
        <end position="382"/>
    </location>
</feature>
<sequence length="382" mass="42389">MAEQRPLTIALVAGETSGDILGAGLIRALKARVPNARFVGVAGPRMQAEGCEAWYEMEELAVMGIVEVLGRLRRLLHIRADLTRRFTELQPDVFVGIDAPDFNITLEGNLKKQGIKTIHYVSPSVWAWRQKRVFKIGRSTNMVLAFLPFEKAFYDKFNVPCRFIGHTMADAMPLDPDKNAARDVLGISHDAHCLALLPGSRGAEVEMLSADFLKTAQLLRQTYPDLEVVVPLVNAKRREQFERIKAEVAPELSVHLLDGMGREAMVASDAALLASGTAALECMLAKCPMVVGYRMKPFTFWLAKRLVKTDYVSLPNLLAGRELVKELLQEECEPHALAEALLPLLANGKTSHAMHDTFRELHQQIRCNADEQAADAVLELAQ</sequence>